<keyword id="KW-0238">DNA-binding</keyword>
<keyword id="KW-0539">Nucleus</keyword>
<keyword id="KW-1185">Reference proteome</keyword>
<keyword id="KW-0804">Transcription</keyword>
<keyword id="KW-0805">Transcription regulation</keyword>
<reference key="1">
    <citation type="submission" date="2001-12" db="EMBL/GenBank/DDBJ databases">
        <title>Arabidopsis thaliana transcription factor WRKY64.</title>
        <authorList>
            <person name="Ulker B."/>
            <person name="Kushnir S."/>
            <person name="Somssich I.E."/>
        </authorList>
    </citation>
    <scope>NUCLEOTIDE SEQUENCE [MRNA]</scope>
    <source>
        <strain>cv. Columbia</strain>
        <tissue>Flower</tissue>
    </source>
</reference>
<reference key="2">
    <citation type="journal article" date="2000" name="Nature">
        <title>Sequence and analysis of chromosome 1 of the plant Arabidopsis thaliana.</title>
        <authorList>
            <person name="Theologis A."/>
            <person name="Ecker J.R."/>
            <person name="Palm C.J."/>
            <person name="Federspiel N.A."/>
            <person name="Kaul S."/>
            <person name="White O."/>
            <person name="Alonso J."/>
            <person name="Altafi H."/>
            <person name="Araujo R."/>
            <person name="Bowman C.L."/>
            <person name="Brooks S.Y."/>
            <person name="Buehler E."/>
            <person name="Chan A."/>
            <person name="Chao Q."/>
            <person name="Chen H."/>
            <person name="Cheuk R.F."/>
            <person name="Chin C.W."/>
            <person name="Chung M.K."/>
            <person name="Conn L."/>
            <person name="Conway A.B."/>
            <person name="Conway A.R."/>
            <person name="Creasy T.H."/>
            <person name="Dewar K."/>
            <person name="Dunn P."/>
            <person name="Etgu P."/>
            <person name="Feldblyum T.V."/>
            <person name="Feng J.-D."/>
            <person name="Fong B."/>
            <person name="Fujii C.Y."/>
            <person name="Gill J.E."/>
            <person name="Goldsmith A.D."/>
            <person name="Haas B."/>
            <person name="Hansen N.F."/>
            <person name="Hughes B."/>
            <person name="Huizar L."/>
            <person name="Hunter J.L."/>
            <person name="Jenkins J."/>
            <person name="Johnson-Hopson C."/>
            <person name="Khan S."/>
            <person name="Khaykin E."/>
            <person name="Kim C.J."/>
            <person name="Koo H.L."/>
            <person name="Kremenetskaia I."/>
            <person name="Kurtz D.B."/>
            <person name="Kwan A."/>
            <person name="Lam B."/>
            <person name="Langin-Hooper S."/>
            <person name="Lee A."/>
            <person name="Lee J.M."/>
            <person name="Lenz C.A."/>
            <person name="Li J.H."/>
            <person name="Li Y.-P."/>
            <person name="Lin X."/>
            <person name="Liu S.X."/>
            <person name="Liu Z.A."/>
            <person name="Luros J.S."/>
            <person name="Maiti R."/>
            <person name="Marziali A."/>
            <person name="Militscher J."/>
            <person name="Miranda M."/>
            <person name="Nguyen M."/>
            <person name="Nierman W.C."/>
            <person name="Osborne B.I."/>
            <person name="Pai G."/>
            <person name="Peterson J."/>
            <person name="Pham P.K."/>
            <person name="Rizzo M."/>
            <person name="Rooney T."/>
            <person name="Rowley D."/>
            <person name="Sakano H."/>
            <person name="Salzberg S.L."/>
            <person name="Schwartz J.R."/>
            <person name="Shinn P."/>
            <person name="Southwick A.M."/>
            <person name="Sun H."/>
            <person name="Tallon L.J."/>
            <person name="Tambunga G."/>
            <person name="Toriumi M.J."/>
            <person name="Town C.D."/>
            <person name="Utterback T."/>
            <person name="Van Aken S."/>
            <person name="Vaysberg M."/>
            <person name="Vysotskaia V.S."/>
            <person name="Walker M."/>
            <person name="Wu D."/>
            <person name="Yu G."/>
            <person name="Fraser C.M."/>
            <person name="Venter J.C."/>
            <person name="Davis R.W."/>
        </authorList>
    </citation>
    <scope>NUCLEOTIDE SEQUENCE [LARGE SCALE GENOMIC DNA]</scope>
    <source>
        <strain>cv. Columbia</strain>
    </source>
</reference>
<reference key="3">
    <citation type="journal article" date="2017" name="Plant J.">
        <title>Araport11: a complete reannotation of the Arabidopsis thaliana reference genome.</title>
        <authorList>
            <person name="Cheng C.Y."/>
            <person name="Krishnakumar V."/>
            <person name="Chan A.P."/>
            <person name="Thibaud-Nissen F."/>
            <person name="Schobel S."/>
            <person name="Town C.D."/>
        </authorList>
    </citation>
    <scope>GENOME REANNOTATION</scope>
    <source>
        <strain>cv. Columbia</strain>
    </source>
</reference>
<proteinExistence type="evidence at protein level"/>
<gene>
    <name type="primary">WRKY64</name>
    <name type="ordered locus">At1g66560</name>
    <name type="ORF">F28G11.2</name>
    <name type="ORF">T12I7.1</name>
</gene>
<evidence type="ECO:0000250" key="1"/>
<evidence type="ECO:0000255" key="2">
    <source>
        <dbReference type="PROSITE-ProRule" id="PRU00223"/>
    </source>
</evidence>
<evidence type="ECO:0000305" key="3"/>
<accession>Q9C557</accession>
<comment type="function">
    <text evidence="1">Transcription factor. Interacts specifically with the W box (5'-(T)TGAC[CT]-3'), a frequently occurring elicitor-responsive cis-acting element (By similarity).</text>
</comment>
<comment type="interaction">
    <interactant intactId="EBI-25513118">
        <id>Q9C557</id>
    </interactant>
    <interactant intactId="EBI-1993263">
        <id>Q8GWF1</id>
        <label>WRKY38</label>
    </interactant>
    <organismsDiffer>false</organismsDiffer>
    <experiments>3</experiments>
</comment>
<comment type="subcellular location">
    <subcellularLocation>
        <location evidence="3">Nucleus</location>
    </subcellularLocation>
</comment>
<comment type="similarity">
    <text evidence="3">Belongs to the WRKY group III family.</text>
</comment>
<dbReference type="EMBL" id="AY071850">
    <property type="protein sequence ID" value="AAL61860.1"/>
    <property type="molecule type" value="mRNA"/>
</dbReference>
<dbReference type="EMBL" id="AC074025">
    <property type="protein sequence ID" value="AAG51157.1"/>
    <property type="molecule type" value="Genomic_DNA"/>
</dbReference>
<dbReference type="EMBL" id="AC079285">
    <property type="protein sequence ID" value="AAG51170.1"/>
    <property type="molecule type" value="Genomic_DNA"/>
</dbReference>
<dbReference type="EMBL" id="CP002684">
    <property type="protein sequence ID" value="AEE34527.1"/>
    <property type="molecule type" value="Genomic_DNA"/>
</dbReference>
<dbReference type="PIR" id="D96691">
    <property type="entry name" value="D96691"/>
</dbReference>
<dbReference type="RefSeq" id="NP_176829.1">
    <property type="nucleotide sequence ID" value="NM_105327.2"/>
</dbReference>
<dbReference type="SMR" id="Q9C557"/>
<dbReference type="BioGRID" id="28195">
    <property type="interactions" value="1"/>
</dbReference>
<dbReference type="IntAct" id="Q9C557">
    <property type="interactions" value="1"/>
</dbReference>
<dbReference type="STRING" id="3702.Q9C557"/>
<dbReference type="GlyGen" id="Q9C557">
    <property type="glycosylation" value="1 site"/>
</dbReference>
<dbReference type="PaxDb" id="3702-AT1G66560.1"/>
<dbReference type="EnsemblPlants" id="AT1G66560.1">
    <property type="protein sequence ID" value="AT1G66560.1"/>
    <property type="gene ID" value="AT1G66560"/>
</dbReference>
<dbReference type="GeneID" id="842974"/>
<dbReference type="Gramene" id="AT1G66560.1">
    <property type="protein sequence ID" value="AT1G66560.1"/>
    <property type="gene ID" value="AT1G66560"/>
</dbReference>
<dbReference type="KEGG" id="ath:AT1G66560"/>
<dbReference type="Araport" id="AT1G66560"/>
<dbReference type="TAIR" id="AT1G66560">
    <property type="gene designation" value="WRKY64"/>
</dbReference>
<dbReference type="HOGENOM" id="CLU_100759_0_0_1"/>
<dbReference type="InParanoid" id="Q9C557"/>
<dbReference type="OMA" id="MCEVNAF"/>
<dbReference type="PhylomeDB" id="Q9C557"/>
<dbReference type="PRO" id="PR:Q9C557"/>
<dbReference type="Proteomes" id="UP000006548">
    <property type="component" value="Chromosome 1"/>
</dbReference>
<dbReference type="ExpressionAtlas" id="Q9C557">
    <property type="expression patterns" value="baseline and differential"/>
</dbReference>
<dbReference type="GO" id="GO:0005634">
    <property type="term" value="C:nucleus"/>
    <property type="evidence" value="ECO:0007669"/>
    <property type="project" value="UniProtKB-SubCell"/>
</dbReference>
<dbReference type="GO" id="GO:0003700">
    <property type="term" value="F:DNA-binding transcription factor activity"/>
    <property type="evidence" value="ECO:0000250"/>
    <property type="project" value="TAIR"/>
</dbReference>
<dbReference type="GO" id="GO:0043565">
    <property type="term" value="F:sequence-specific DNA binding"/>
    <property type="evidence" value="ECO:0007669"/>
    <property type="project" value="InterPro"/>
</dbReference>
<dbReference type="FunFam" id="2.20.25.80:FF:000012">
    <property type="entry name" value="Probable WRKY transcription factor 38"/>
    <property type="match status" value="1"/>
</dbReference>
<dbReference type="Gene3D" id="2.20.25.80">
    <property type="entry name" value="WRKY domain"/>
    <property type="match status" value="1"/>
</dbReference>
<dbReference type="InterPro" id="IPR003657">
    <property type="entry name" value="WRKY_dom"/>
</dbReference>
<dbReference type="InterPro" id="IPR036576">
    <property type="entry name" value="WRKY_dom_sf"/>
</dbReference>
<dbReference type="InterPro" id="IPR044810">
    <property type="entry name" value="WRKY_plant"/>
</dbReference>
<dbReference type="PANTHER" id="PTHR31282">
    <property type="entry name" value="WRKY TRANSCRIPTION FACTOR 21-RELATED"/>
    <property type="match status" value="1"/>
</dbReference>
<dbReference type="Pfam" id="PF03106">
    <property type="entry name" value="WRKY"/>
    <property type="match status" value="1"/>
</dbReference>
<dbReference type="SMART" id="SM00774">
    <property type="entry name" value="WRKY"/>
    <property type="match status" value="1"/>
</dbReference>
<dbReference type="SUPFAM" id="SSF118290">
    <property type="entry name" value="WRKY DNA-binding domain"/>
    <property type="match status" value="1"/>
</dbReference>
<dbReference type="PROSITE" id="PS50811">
    <property type="entry name" value="WRKY"/>
    <property type="match status" value="1"/>
</dbReference>
<name>WRK64_ARATH</name>
<sequence length="249" mass="28550">MFSNIDQTAVAALLRGQGCANSLKRLLENHKLSSDSTEPLIYTILNSFSLALSFVDPPSLLPHNESSLQNMTSHVLQRSSKKKYYGAEDLEYYRDESPTPRPDDGFTWRKYGQKTIKTSPYQRCYYRCTYAKDQNCNARKRVQMIQDNPPVYRTTYLGKHVCKAVAVHDDTYGSEMIKFDQVVSESVMPQLATIDEQAITMEDEAIDHIMNQECDINDFSVDDDPFWASQFPPFSSEDIMFFDNIANLD</sequence>
<protein>
    <recommendedName>
        <fullName>Probable WRKY transcription factor 64</fullName>
    </recommendedName>
    <alternativeName>
        <fullName>WRKY DNA-binding protein 64</fullName>
    </alternativeName>
</protein>
<feature type="chain" id="PRO_0000133705" description="Probable WRKY transcription factor 64">
    <location>
        <begin position="1"/>
        <end position="249"/>
    </location>
</feature>
<feature type="DNA-binding region" description="WRKY" evidence="2">
    <location>
        <begin position="97"/>
        <end position="165"/>
    </location>
</feature>
<organism>
    <name type="scientific">Arabidopsis thaliana</name>
    <name type="common">Mouse-ear cress</name>
    <dbReference type="NCBI Taxonomy" id="3702"/>
    <lineage>
        <taxon>Eukaryota</taxon>
        <taxon>Viridiplantae</taxon>
        <taxon>Streptophyta</taxon>
        <taxon>Embryophyta</taxon>
        <taxon>Tracheophyta</taxon>
        <taxon>Spermatophyta</taxon>
        <taxon>Magnoliopsida</taxon>
        <taxon>eudicotyledons</taxon>
        <taxon>Gunneridae</taxon>
        <taxon>Pentapetalae</taxon>
        <taxon>rosids</taxon>
        <taxon>malvids</taxon>
        <taxon>Brassicales</taxon>
        <taxon>Brassicaceae</taxon>
        <taxon>Camelineae</taxon>
        <taxon>Arabidopsis</taxon>
    </lineage>
</organism>